<reference key="1">
    <citation type="journal article" date="2003" name="J. Bacteriol.">
        <title>Comparative analyses of the complete genome sequences of Pierce's disease and citrus variegated chlorosis strains of Xylella fastidiosa.</title>
        <authorList>
            <person name="Van Sluys M.A."/>
            <person name="de Oliveira M.C."/>
            <person name="Monteiro-Vitorello C.B."/>
            <person name="Miyaki C.Y."/>
            <person name="Furlan L.R."/>
            <person name="Camargo L.E.A."/>
            <person name="da Silva A.C.R."/>
            <person name="Moon D.H."/>
            <person name="Takita M.A."/>
            <person name="Lemos E.G.M."/>
            <person name="Machado M.A."/>
            <person name="Ferro M.I.T."/>
            <person name="da Silva F.R."/>
            <person name="Goldman M.H.S."/>
            <person name="Goldman G.H."/>
            <person name="Lemos M.V.F."/>
            <person name="El-Dorry H."/>
            <person name="Tsai S.M."/>
            <person name="Carrer H."/>
            <person name="Carraro D.M."/>
            <person name="de Oliveira R.C."/>
            <person name="Nunes L.R."/>
            <person name="Siqueira W.J."/>
            <person name="Coutinho L.L."/>
            <person name="Kimura E.T."/>
            <person name="Ferro E.S."/>
            <person name="Harakava R."/>
            <person name="Kuramae E.E."/>
            <person name="Marino C.L."/>
            <person name="Giglioti E."/>
            <person name="Abreu I.L."/>
            <person name="Alves L.M.C."/>
            <person name="do Amaral A.M."/>
            <person name="Baia G.S."/>
            <person name="Blanco S.R."/>
            <person name="Brito M.S."/>
            <person name="Cannavan F.S."/>
            <person name="Celestino A.V."/>
            <person name="da Cunha A.F."/>
            <person name="Fenille R.C."/>
            <person name="Ferro J.A."/>
            <person name="Formighieri E.F."/>
            <person name="Kishi L.T."/>
            <person name="Leoni S.G."/>
            <person name="Oliveira A.R."/>
            <person name="Rosa V.E. Jr."/>
            <person name="Sassaki F.T."/>
            <person name="Sena J.A.D."/>
            <person name="de Souza A.A."/>
            <person name="Truffi D."/>
            <person name="Tsukumo F."/>
            <person name="Yanai G.M."/>
            <person name="Zaros L.G."/>
            <person name="Civerolo E.L."/>
            <person name="Simpson A.J.G."/>
            <person name="Almeida N.F. Jr."/>
            <person name="Setubal J.C."/>
            <person name="Kitajima J.P."/>
        </authorList>
    </citation>
    <scope>NUCLEOTIDE SEQUENCE [LARGE SCALE GENOMIC DNA]</scope>
    <source>
        <strain>Temecula1 / ATCC 700964</strain>
    </source>
</reference>
<protein>
    <recommendedName>
        <fullName evidence="1">Transcription antitermination protein NusB</fullName>
    </recommendedName>
    <alternativeName>
        <fullName evidence="1">Antitermination factor NusB</fullName>
    </alternativeName>
</protein>
<keyword id="KW-1185">Reference proteome</keyword>
<keyword id="KW-0694">RNA-binding</keyword>
<keyword id="KW-0804">Transcription</keyword>
<keyword id="KW-0889">Transcription antitermination</keyword>
<keyword id="KW-0805">Transcription regulation</keyword>
<dbReference type="EMBL" id="AE009442">
    <property type="protein sequence ID" value="AAO29578.1"/>
    <property type="molecule type" value="Genomic_DNA"/>
</dbReference>
<dbReference type="RefSeq" id="WP_004089680.1">
    <property type="nucleotide sequence ID" value="NC_004556.1"/>
</dbReference>
<dbReference type="SMR" id="Q87AS8"/>
<dbReference type="GeneID" id="93905589"/>
<dbReference type="KEGG" id="xft:PD_1743"/>
<dbReference type="HOGENOM" id="CLU_087843_4_1_6"/>
<dbReference type="Proteomes" id="UP000002516">
    <property type="component" value="Chromosome"/>
</dbReference>
<dbReference type="GO" id="GO:0005829">
    <property type="term" value="C:cytosol"/>
    <property type="evidence" value="ECO:0007669"/>
    <property type="project" value="TreeGrafter"/>
</dbReference>
<dbReference type="GO" id="GO:0003723">
    <property type="term" value="F:RNA binding"/>
    <property type="evidence" value="ECO:0007669"/>
    <property type="project" value="UniProtKB-UniRule"/>
</dbReference>
<dbReference type="GO" id="GO:0006353">
    <property type="term" value="P:DNA-templated transcription termination"/>
    <property type="evidence" value="ECO:0007669"/>
    <property type="project" value="UniProtKB-UniRule"/>
</dbReference>
<dbReference type="GO" id="GO:0031564">
    <property type="term" value="P:transcription antitermination"/>
    <property type="evidence" value="ECO:0007669"/>
    <property type="project" value="UniProtKB-KW"/>
</dbReference>
<dbReference type="FunFam" id="1.10.940.10:FF:000001">
    <property type="entry name" value="Transcription antitermination factor NusB"/>
    <property type="match status" value="1"/>
</dbReference>
<dbReference type="Gene3D" id="1.10.940.10">
    <property type="entry name" value="NusB-like"/>
    <property type="match status" value="1"/>
</dbReference>
<dbReference type="HAMAP" id="MF_00073">
    <property type="entry name" value="NusB"/>
    <property type="match status" value="1"/>
</dbReference>
<dbReference type="InterPro" id="IPR035926">
    <property type="entry name" value="NusB-like_sf"/>
</dbReference>
<dbReference type="InterPro" id="IPR011605">
    <property type="entry name" value="NusB_fam"/>
</dbReference>
<dbReference type="InterPro" id="IPR006027">
    <property type="entry name" value="NusB_RsmB_TIM44"/>
</dbReference>
<dbReference type="NCBIfam" id="TIGR01951">
    <property type="entry name" value="nusB"/>
    <property type="match status" value="1"/>
</dbReference>
<dbReference type="PANTHER" id="PTHR11078:SF3">
    <property type="entry name" value="ANTITERMINATION NUSB DOMAIN-CONTAINING PROTEIN"/>
    <property type="match status" value="1"/>
</dbReference>
<dbReference type="PANTHER" id="PTHR11078">
    <property type="entry name" value="N UTILIZATION SUBSTANCE PROTEIN B-RELATED"/>
    <property type="match status" value="1"/>
</dbReference>
<dbReference type="Pfam" id="PF01029">
    <property type="entry name" value="NusB"/>
    <property type="match status" value="1"/>
</dbReference>
<dbReference type="SUPFAM" id="SSF48013">
    <property type="entry name" value="NusB-like"/>
    <property type="match status" value="1"/>
</dbReference>
<organism>
    <name type="scientific">Xylella fastidiosa (strain Temecula1 / ATCC 700964)</name>
    <dbReference type="NCBI Taxonomy" id="183190"/>
    <lineage>
        <taxon>Bacteria</taxon>
        <taxon>Pseudomonadati</taxon>
        <taxon>Pseudomonadota</taxon>
        <taxon>Gammaproteobacteria</taxon>
        <taxon>Lysobacterales</taxon>
        <taxon>Lysobacteraceae</taxon>
        <taxon>Xylella</taxon>
    </lineage>
</organism>
<accession>Q87AS8</accession>
<sequence length="157" mass="17579">MSKVSGGGPCSRRRDGVDPALRSRARRRALQAVYAWQISGGVAKQVIAHFAHEQAYEVADLVYFEDLVEGVLTHCAELDEKLTPYLDRTIEEVDAIERAVLRLGAYELLYRQDVPYRVVINEAIMTAKRFGSKYGHTYVNGVLDRAALALRKVEVLG</sequence>
<comment type="function">
    <text evidence="1">Involved in transcription antitermination. Required for transcription of ribosomal RNA (rRNA) genes. Binds specifically to the boxA antiterminator sequence of the ribosomal RNA (rrn) operons.</text>
</comment>
<comment type="similarity">
    <text evidence="1">Belongs to the NusB family.</text>
</comment>
<proteinExistence type="inferred from homology"/>
<name>NUSB_XYLFT</name>
<evidence type="ECO:0000255" key="1">
    <source>
        <dbReference type="HAMAP-Rule" id="MF_00073"/>
    </source>
</evidence>
<gene>
    <name evidence="1" type="primary">nusB</name>
    <name type="ordered locus">PD_1743</name>
</gene>
<feature type="chain" id="PRO_0000176611" description="Transcription antitermination protein NusB">
    <location>
        <begin position="1"/>
        <end position="157"/>
    </location>
</feature>